<keyword id="KW-1003">Cell membrane</keyword>
<keyword id="KW-0325">Glycoprotein</keyword>
<keyword id="KW-0433">Leucine-rich repeat</keyword>
<keyword id="KW-0472">Membrane</keyword>
<keyword id="KW-0675">Receptor</keyword>
<keyword id="KW-1185">Reference proteome</keyword>
<keyword id="KW-0677">Repeat</keyword>
<keyword id="KW-0732">Signal</keyword>
<keyword id="KW-0812">Transmembrane</keyword>
<keyword id="KW-1133">Transmembrane helix</keyword>
<feature type="signal peptide" evidence="1">
    <location>
        <begin position="1"/>
        <end position="29"/>
    </location>
</feature>
<feature type="chain" id="PRO_0000443806" description="Receptor like protein 24">
    <location>
        <begin position="30"/>
        <end position="864"/>
    </location>
</feature>
<feature type="topological domain" description="Extracellular" evidence="1">
    <location>
        <begin position="30"/>
        <end position="830"/>
    </location>
</feature>
<feature type="transmembrane region" description="Helical" evidence="1">
    <location>
        <begin position="831"/>
        <end position="851"/>
    </location>
</feature>
<feature type="topological domain" description="Cytoplasmic" evidence="1">
    <location>
        <begin position="852"/>
        <end position="864"/>
    </location>
</feature>
<feature type="repeat" description="LRR 1" evidence="1">
    <location>
        <begin position="100"/>
        <end position="125"/>
    </location>
</feature>
<feature type="repeat" description="LRR 2" evidence="1">
    <location>
        <begin position="127"/>
        <end position="148"/>
    </location>
</feature>
<feature type="repeat" description="LRR 3" evidence="1">
    <location>
        <begin position="156"/>
        <end position="182"/>
    </location>
</feature>
<feature type="repeat" description="LRR 4" evidence="1">
    <location>
        <begin position="183"/>
        <end position="205"/>
    </location>
</feature>
<feature type="repeat" description="LRR 5" evidence="1">
    <location>
        <begin position="207"/>
        <end position="229"/>
    </location>
</feature>
<feature type="repeat" description="LRR 6" evidence="1">
    <location>
        <begin position="230"/>
        <end position="253"/>
    </location>
</feature>
<feature type="repeat" description="LRR 7" evidence="1">
    <location>
        <begin position="254"/>
        <end position="277"/>
    </location>
</feature>
<feature type="repeat" description="LRR 8" evidence="1">
    <location>
        <begin position="279"/>
        <end position="303"/>
    </location>
</feature>
<feature type="repeat" description="LRR 9" evidence="1">
    <location>
        <begin position="305"/>
        <end position="326"/>
    </location>
</feature>
<feature type="repeat" description="LRR 10" evidence="1">
    <location>
        <begin position="327"/>
        <end position="350"/>
    </location>
</feature>
<feature type="repeat" description="LRR 11" evidence="1">
    <location>
        <begin position="351"/>
        <end position="376"/>
    </location>
</feature>
<feature type="repeat" description="LRR 12" evidence="1">
    <location>
        <begin position="378"/>
        <end position="398"/>
    </location>
</feature>
<feature type="repeat" description="LRR 13" evidence="1">
    <location>
        <begin position="399"/>
        <end position="423"/>
    </location>
</feature>
<feature type="repeat" description="LRR 14" evidence="1">
    <location>
        <begin position="425"/>
        <end position="448"/>
    </location>
</feature>
<feature type="repeat" description="LRR 15" evidence="1">
    <location>
        <begin position="449"/>
        <end position="472"/>
    </location>
</feature>
<feature type="repeat" description="LRR 16; degenerate" evidence="4">
    <location>
        <begin position="473"/>
        <end position="492"/>
    </location>
</feature>
<feature type="repeat" description="LRR 17" evidence="1">
    <location>
        <begin position="493"/>
        <end position="514"/>
    </location>
</feature>
<feature type="repeat" description="LRR 18" evidence="1">
    <location>
        <begin position="515"/>
        <end position="538"/>
    </location>
</feature>
<feature type="repeat" description="LRR 19" evidence="1">
    <location>
        <begin position="539"/>
        <end position="562"/>
    </location>
</feature>
<feature type="repeat" description="LRR 20" evidence="1">
    <location>
        <begin position="564"/>
        <end position="585"/>
    </location>
</feature>
<feature type="repeat" description="LRR 21" evidence="1">
    <location>
        <begin position="586"/>
        <end position="610"/>
    </location>
</feature>
<feature type="repeat" description="LRR 22" evidence="1">
    <location>
        <begin position="613"/>
        <end position="637"/>
    </location>
</feature>
<feature type="repeat" description="LRR 23" evidence="1">
    <location>
        <begin position="688"/>
        <end position="712"/>
    </location>
</feature>
<feature type="repeat" description="LRR 24" evidence="1">
    <location>
        <begin position="713"/>
        <end position="735"/>
    </location>
</feature>
<feature type="repeat" description="LRR 25" evidence="1">
    <location>
        <begin position="736"/>
        <end position="760"/>
    </location>
</feature>
<feature type="repeat" description="LRR 26" evidence="1">
    <location>
        <begin position="762"/>
        <end position="785"/>
    </location>
</feature>
<feature type="glycosylation site" description="N-linked (GlcNAc...) asparagine" evidence="2">
    <location>
        <position position="61"/>
    </location>
</feature>
<feature type="glycosylation site" description="N-linked (GlcNAc...) asparagine" evidence="2">
    <location>
        <position position="73"/>
    </location>
</feature>
<feature type="glycosylation site" description="N-linked (GlcNAc...) asparagine" evidence="2">
    <location>
        <position position="94"/>
    </location>
</feature>
<feature type="glycosylation site" description="N-linked (GlcNAc...) asparagine" evidence="2">
    <location>
        <position position="112"/>
    </location>
</feature>
<feature type="glycosylation site" description="N-linked (GlcNAc...) asparagine" evidence="2">
    <location>
        <position position="176"/>
    </location>
</feature>
<feature type="glycosylation site" description="N-linked (GlcNAc...) asparagine" evidence="2">
    <location>
        <position position="194"/>
    </location>
</feature>
<feature type="glycosylation site" description="N-linked (GlcNAc...) asparagine" evidence="2">
    <location>
        <position position="229"/>
    </location>
</feature>
<feature type="glycosylation site" description="N-linked (GlcNAc...) asparagine" evidence="2">
    <location>
        <position position="252"/>
    </location>
</feature>
<feature type="glycosylation site" description="N-linked (GlcNAc...) asparagine" evidence="2">
    <location>
        <position position="298"/>
    </location>
</feature>
<feature type="glycosylation site" description="N-linked (GlcNAc...) asparagine" evidence="2">
    <location>
        <position position="338"/>
    </location>
</feature>
<feature type="glycosylation site" description="N-linked (GlcNAc...) asparagine" evidence="2">
    <location>
        <position position="433"/>
    </location>
</feature>
<feature type="glycosylation site" description="N-linked (GlcNAc...) asparagine" evidence="2">
    <location>
        <position position="448"/>
    </location>
</feature>
<feature type="glycosylation site" description="N-linked (GlcNAc...) asparagine" evidence="2">
    <location>
        <position position="492"/>
    </location>
</feature>
<feature type="glycosylation site" description="N-linked (GlcNAc...) asparagine" evidence="2">
    <location>
        <position position="505"/>
    </location>
</feature>
<feature type="glycosylation site" description="N-linked (GlcNAc...) asparagine" evidence="2">
    <location>
        <position position="561"/>
    </location>
</feature>
<feature type="glycosylation site" description="N-linked (GlcNAc...) asparagine" evidence="2">
    <location>
        <position position="719"/>
    </location>
</feature>
<reference key="1">
    <citation type="journal article" date="1999" name="Nature">
        <title>Sequence and analysis of chromosome 2 of the plant Arabidopsis thaliana.</title>
        <authorList>
            <person name="Lin X."/>
            <person name="Kaul S."/>
            <person name="Rounsley S.D."/>
            <person name="Shea T.P."/>
            <person name="Benito M.-I."/>
            <person name="Town C.D."/>
            <person name="Fujii C.Y."/>
            <person name="Mason T.M."/>
            <person name="Bowman C.L."/>
            <person name="Barnstead M.E."/>
            <person name="Feldblyum T.V."/>
            <person name="Buell C.R."/>
            <person name="Ketchum K.A."/>
            <person name="Lee J.J."/>
            <person name="Ronning C.M."/>
            <person name="Koo H.L."/>
            <person name="Moffat K.S."/>
            <person name="Cronin L.A."/>
            <person name="Shen M."/>
            <person name="Pai G."/>
            <person name="Van Aken S."/>
            <person name="Umayam L."/>
            <person name="Tallon L.J."/>
            <person name="Gill J.E."/>
            <person name="Adams M.D."/>
            <person name="Carrera A.J."/>
            <person name="Creasy T.H."/>
            <person name="Goodman H.M."/>
            <person name="Somerville C.R."/>
            <person name="Copenhaver G.P."/>
            <person name="Preuss D."/>
            <person name="Nierman W.C."/>
            <person name="White O."/>
            <person name="Eisen J.A."/>
            <person name="Salzberg S.L."/>
            <person name="Fraser C.M."/>
            <person name="Venter J.C."/>
        </authorList>
    </citation>
    <scope>NUCLEOTIDE SEQUENCE [LARGE SCALE GENOMIC DNA]</scope>
    <source>
        <strain>cv. Columbia</strain>
    </source>
</reference>
<reference key="2">
    <citation type="journal article" date="2017" name="Plant J.">
        <title>Araport11: a complete reannotation of the Arabidopsis thaliana reference genome.</title>
        <authorList>
            <person name="Cheng C.Y."/>
            <person name="Krishnakumar V."/>
            <person name="Chan A.P."/>
            <person name="Thibaud-Nissen F."/>
            <person name="Schobel S."/>
            <person name="Town C.D."/>
        </authorList>
    </citation>
    <scope>GENOME REANNOTATION</scope>
    <source>
        <strain>cv. Columbia</strain>
    </source>
</reference>
<reference key="3">
    <citation type="journal article" date="2005" name="Plant Physiol.">
        <title>Phylogenomic analysis of the receptor-like proteins of rice and Arabidopsis.</title>
        <authorList>
            <person name="Fritz-Laylin L.K."/>
            <person name="Krishnamurthy N."/>
            <person name="Toer M."/>
            <person name="Sjoelander K.V."/>
            <person name="Jones J.D."/>
        </authorList>
    </citation>
    <scope>GENE FAMILY</scope>
</reference>
<reference key="4">
    <citation type="journal article" date="2008" name="Plant Physiol.">
        <title>A genome-wide functional investigation into the roles of receptor-like proteins in Arabidopsis.</title>
        <authorList>
            <person name="Wang G."/>
            <person name="Ellendorff U."/>
            <person name="Kemp B."/>
            <person name="Mansfield J.W."/>
            <person name="Forsyth A."/>
            <person name="Mitchell K."/>
            <person name="Bastas K."/>
            <person name="Liu C.-M."/>
            <person name="Woods-Toer A."/>
            <person name="Zipfel C."/>
            <person name="de Wit P.J.G.M."/>
            <person name="Jones J.D.G."/>
            <person name="Toer M."/>
            <person name="Thomma B.P.H.J."/>
        </authorList>
    </citation>
    <scope>GENE FAMILY</scope>
    <scope>NOMENCLATURE</scope>
</reference>
<organism>
    <name type="scientific">Arabidopsis thaliana</name>
    <name type="common">Mouse-ear cress</name>
    <dbReference type="NCBI Taxonomy" id="3702"/>
    <lineage>
        <taxon>Eukaryota</taxon>
        <taxon>Viridiplantae</taxon>
        <taxon>Streptophyta</taxon>
        <taxon>Embryophyta</taxon>
        <taxon>Tracheophyta</taxon>
        <taxon>Spermatophyta</taxon>
        <taxon>Magnoliopsida</taxon>
        <taxon>eudicotyledons</taxon>
        <taxon>Gunneridae</taxon>
        <taxon>Pentapetalae</taxon>
        <taxon>rosids</taxon>
        <taxon>malvids</taxon>
        <taxon>Brassicales</taxon>
        <taxon>Brassicaceae</taxon>
        <taxon>Camelineae</taxon>
        <taxon>Arabidopsis</taxon>
    </lineage>
</organism>
<evidence type="ECO:0000255" key="1"/>
<evidence type="ECO:0000255" key="2">
    <source>
        <dbReference type="PROSITE-ProRule" id="PRU00498"/>
    </source>
</evidence>
<evidence type="ECO:0000303" key="3">
    <source>
    </source>
</evidence>
<evidence type="ECO:0000305" key="4"/>
<evidence type="ECO:0000312" key="5">
    <source>
        <dbReference type="Araport" id="AT2G33020"/>
    </source>
</evidence>
<evidence type="ECO:0000312" key="6">
    <source>
        <dbReference type="EMBL" id="AAC04918.1"/>
    </source>
</evidence>
<evidence type="ECO:0000312" key="7">
    <source>
        <dbReference type="EMBL" id="AAM14862.1"/>
    </source>
</evidence>
<dbReference type="EMBL" id="AC002334">
    <property type="protein sequence ID" value="AAC04918.1"/>
    <property type="molecule type" value="Genomic_DNA"/>
</dbReference>
<dbReference type="EMBL" id="AC003033">
    <property type="protein sequence ID" value="AAM14862.1"/>
    <property type="molecule type" value="Genomic_DNA"/>
</dbReference>
<dbReference type="EMBL" id="CP002685">
    <property type="protein sequence ID" value="AEC08775.1"/>
    <property type="molecule type" value="Genomic_DNA"/>
</dbReference>
<dbReference type="PIR" id="D84740">
    <property type="entry name" value="D84740"/>
</dbReference>
<dbReference type="PIR" id="T01105">
    <property type="entry name" value="T01105"/>
</dbReference>
<dbReference type="RefSeq" id="NP_180861.1">
    <property type="nucleotide sequence ID" value="NM_128862.2"/>
</dbReference>
<dbReference type="SMR" id="O49329"/>
<dbReference type="STRING" id="3702.O49329"/>
<dbReference type="GlyCosmos" id="O49329">
    <property type="glycosylation" value="16 sites, No reported glycans"/>
</dbReference>
<dbReference type="GlyGen" id="O49329">
    <property type="glycosylation" value="16 sites"/>
</dbReference>
<dbReference type="iPTMnet" id="O49329"/>
<dbReference type="PaxDb" id="3702-AT2G33020.1"/>
<dbReference type="EnsemblPlants" id="AT2G33020.1">
    <property type="protein sequence ID" value="AT2G33020.1"/>
    <property type="gene ID" value="AT2G33020"/>
</dbReference>
<dbReference type="GeneID" id="817864"/>
<dbReference type="Gramene" id="AT2G33020.1">
    <property type="protein sequence ID" value="AT2G33020.1"/>
    <property type="gene ID" value="AT2G33020"/>
</dbReference>
<dbReference type="KEGG" id="ath:AT2G33020"/>
<dbReference type="Araport" id="AT2G33020"/>
<dbReference type="TAIR" id="AT2G33020">
    <property type="gene designation" value="RLP24"/>
</dbReference>
<dbReference type="eggNOG" id="KOG0619">
    <property type="taxonomic scope" value="Eukaryota"/>
</dbReference>
<dbReference type="HOGENOM" id="CLU_000288_18_3_1"/>
<dbReference type="InParanoid" id="O49329"/>
<dbReference type="OMA" id="PEWFVNI"/>
<dbReference type="PhylomeDB" id="O49329"/>
<dbReference type="PRO" id="PR:O49329"/>
<dbReference type="Proteomes" id="UP000006548">
    <property type="component" value="Chromosome 2"/>
</dbReference>
<dbReference type="ExpressionAtlas" id="O49329">
    <property type="expression patterns" value="baseline and differential"/>
</dbReference>
<dbReference type="GO" id="GO:0005886">
    <property type="term" value="C:plasma membrane"/>
    <property type="evidence" value="ECO:0007669"/>
    <property type="project" value="UniProtKB-SubCell"/>
</dbReference>
<dbReference type="FunFam" id="3.80.10.10:FF:000041">
    <property type="entry name" value="LRR receptor-like serine/threonine-protein kinase ERECTA"/>
    <property type="match status" value="1"/>
</dbReference>
<dbReference type="FunFam" id="3.80.10.10:FF:000111">
    <property type="entry name" value="LRR receptor-like serine/threonine-protein kinase ERECTA"/>
    <property type="match status" value="1"/>
</dbReference>
<dbReference type="FunFam" id="3.80.10.10:FF:000095">
    <property type="entry name" value="LRR receptor-like serine/threonine-protein kinase GSO1"/>
    <property type="match status" value="1"/>
</dbReference>
<dbReference type="Gene3D" id="3.80.10.10">
    <property type="entry name" value="Ribonuclease Inhibitor"/>
    <property type="match status" value="5"/>
</dbReference>
<dbReference type="InterPro" id="IPR001611">
    <property type="entry name" value="Leu-rich_rpt"/>
</dbReference>
<dbReference type="InterPro" id="IPR003591">
    <property type="entry name" value="Leu-rich_rpt_typical-subtyp"/>
</dbReference>
<dbReference type="InterPro" id="IPR032675">
    <property type="entry name" value="LRR_dom_sf"/>
</dbReference>
<dbReference type="PANTHER" id="PTHR27004:SF464">
    <property type="entry name" value="LRR RECEPTOR-LIKE KINASE"/>
    <property type="match status" value="1"/>
</dbReference>
<dbReference type="PANTHER" id="PTHR27004">
    <property type="entry name" value="RECEPTOR-LIKE PROTEIN 12 ISOFORM X1"/>
    <property type="match status" value="1"/>
</dbReference>
<dbReference type="Pfam" id="PF00560">
    <property type="entry name" value="LRR_1"/>
    <property type="match status" value="6"/>
</dbReference>
<dbReference type="Pfam" id="PF13855">
    <property type="entry name" value="LRR_8"/>
    <property type="match status" value="1"/>
</dbReference>
<dbReference type="SMART" id="SM00365">
    <property type="entry name" value="LRR_SD22"/>
    <property type="match status" value="5"/>
</dbReference>
<dbReference type="SMART" id="SM00369">
    <property type="entry name" value="LRR_TYP"/>
    <property type="match status" value="8"/>
</dbReference>
<dbReference type="SUPFAM" id="SSF52047">
    <property type="entry name" value="RNI-like"/>
    <property type="match status" value="2"/>
</dbReference>
<sequence length="864" mass="95706">MKTVFKSLLLLHFLLLLLLCFVSPSSFFLLKVPVGGLVACRLRQSQAFMQFKDEFDTRHCNHSDDFNGVWCDNSTGAVTVLQLRDCLSGTLKSNSSLFGFHQLRYLALNRNNFTSASLPSEFCNLNKLKLLSLFSNGFIDLSHNDLMGSFPLVRNLGKLAVLDLSDNHFSGTLNPNNSLFELHSLRYLNLAFNNISSSLPSKFGNLNKLEVLSLSFNGFSGQCFPTISNLTRITQLYLHNNELTGSFPLVQNLTKLSFLGLSDNLFSGTIPSYLFTFPSLSTLDLRENDLSGSIEVPNSSTSSKLEIMYLGFNHLEGKILEPISKLINLKRLDLSFLNTSYPIDLNLLSPLKSLSYLDFSGNSLSPASLSSSSYIPLSMESIVLSLCGIREFPNILKHLQNLIHIDITSNQIKGKIPEWLWTLPQLSFVDISNNSFNGFQGSAEVFVNLSVRILMLDANNFEGALPTLPLSIIGFSAIHNSFTGEIPLSICNRTSLTMVDLSYNNFTGPIPQCLSNFMFVNLRKNDLEGSIPDTFYTDSSLKSLDVGYNRLTGKLPRSLLNCSSLRFLSVDNNRVKDTFPFWLKALPNLRVLTLRSNKFYGPISPPHQGPLGFPELRIFEIADNMFTGSLPPSFFVNWKASALTKNEDGGLYMVYEYDKAANSPVRYTYTDTIDLQYKGLHMEQERVLTSYAAIDFSGNRLQGQIPESIGLLKALIALNLSNNAFTGHIPLSFANLMNLESLDMSGNQLSGTIPNGLGSLSFLVYISVAHNKLKGEIPQGTQITGQIKSSFEGNAGLCGLPLQETCFDSSVPPIQPKQEDEEKGEVINWKAVAIGYAPGLLFGLAIAHLIASYKPEWLVKIIGF</sequence>
<accession>O49329</accession>
<proteinExistence type="inferred from homology"/>
<protein>
    <recommendedName>
        <fullName evidence="3">Receptor like protein 24</fullName>
        <shortName evidence="3">AtRLP24</shortName>
    </recommendedName>
</protein>
<comment type="subcellular location">
    <subcellularLocation>
        <location evidence="4">Cell membrane</location>
        <topology evidence="4">Single-pass type I membrane protein</topology>
    </subcellularLocation>
</comment>
<comment type="similarity">
    <text evidence="4">Belongs to the RLP family.</text>
</comment>
<name>RP24L_ARATH</name>
<gene>
    <name evidence="3" type="primary">RLP24</name>
    <name evidence="5" type="ordered locus">At2g33020</name>
    <name evidence="6" type="ORF">F25I18.24</name>
    <name evidence="7" type="ORF">T21L14.1</name>
</gene>